<name>ARGB_BACC0</name>
<evidence type="ECO:0000255" key="1">
    <source>
        <dbReference type="HAMAP-Rule" id="MF_00082"/>
    </source>
</evidence>
<reference key="1">
    <citation type="submission" date="2008-10" db="EMBL/GenBank/DDBJ databases">
        <title>Genome sequence of Bacillus cereus AH820.</title>
        <authorList>
            <person name="Dodson R.J."/>
            <person name="Durkin A.S."/>
            <person name="Rosovitz M.J."/>
            <person name="Rasko D.A."/>
            <person name="Hoffmaster A."/>
            <person name="Ravel J."/>
            <person name="Sutton G."/>
        </authorList>
    </citation>
    <scope>NUCLEOTIDE SEQUENCE [LARGE SCALE GENOMIC DNA]</scope>
    <source>
        <strain>AH820</strain>
    </source>
</reference>
<organism>
    <name type="scientific">Bacillus cereus (strain AH820)</name>
    <dbReference type="NCBI Taxonomy" id="405535"/>
    <lineage>
        <taxon>Bacteria</taxon>
        <taxon>Bacillati</taxon>
        <taxon>Bacillota</taxon>
        <taxon>Bacilli</taxon>
        <taxon>Bacillales</taxon>
        <taxon>Bacillaceae</taxon>
        <taxon>Bacillus</taxon>
        <taxon>Bacillus cereus group</taxon>
    </lineage>
</organism>
<proteinExistence type="inferred from homology"/>
<dbReference type="EC" id="2.7.2.8" evidence="1"/>
<dbReference type="EMBL" id="CP001283">
    <property type="protein sequence ID" value="ACK90879.1"/>
    <property type="molecule type" value="Genomic_DNA"/>
</dbReference>
<dbReference type="RefSeq" id="WP_001000909.1">
    <property type="nucleotide sequence ID" value="NC_011773.1"/>
</dbReference>
<dbReference type="SMR" id="B7JLY5"/>
<dbReference type="KEGG" id="bcu:BCAH820_4154"/>
<dbReference type="HOGENOM" id="CLU_053680_0_0_9"/>
<dbReference type="UniPathway" id="UPA00068">
    <property type="reaction ID" value="UER00107"/>
</dbReference>
<dbReference type="Proteomes" id="UP000001363">
    <property type="component" value="Chromosome"/>
</dbReference>
<dbReference type="GO" id="GO:0005737">
    <property type="term" value="C:cytoplasm"/>
    <property type="evidence" value="ECO:0007669"/>
    <property type="project" value="UniProtKB-SubCell"/>
</dbReference>
<dbReference type="GO" id="GO:0003991">
    <property type="term" value="F:acetylglutamate kinase activity"/>
    <property type="evidence" value="ECO:0007669"/>
    <property type="project" value="UniProtKB-UniRule"/>
</dbReference>
<dbReference type="GO" id="GO:0005524">
    <property type="term" value="F:ATP binding"/>
    <property type="evidence" value="ECO:0007669"/>
    <property type="project" value="UniProtKB-UniRule"/>
</dbReference>
<dbReference type="GO" id="GO:0042450">
    <property type="term" value="P:arginine biosynthetic process via ornithine"/>
    <property type="evidence" value="ECO:0007669"/>
    <property type="project" value="UniProtKB-UniRule"/>
</dbReference>
<dbReference type="GO" id="GO:0006526">
    <property type="term" value="P:L-arginine biosynthetic process"/>
    <property type="evidence" value="ECO:0007669"/>
    <property type="project" value="UniProtKB-UniPathway"/>
</dbReference>
<dbReference type="CDD" id="cd04238">
    <property type="entry name" value="AAK_NAGK-like"/>
    <property type="match status" value="1"/>
</dbReference>
<dbReference type="FunFam" id="3.40.1160.10:FF:000004">
    <property type="entry name" value="Acetylglutamate kinase"/>
    <property type="match status" value="1"/>
</dbReference>
<dbReference type="Gene3D" id="3.40.1160.10">
    <property type="entry name" value="Acetylglutamate kinase-like"/>
    <property type="match status" value="1"/>
</dbReference>
<dbReference type="HAMAP" id="MF_00082">
    <property type="entry name" value="ArgB"/>
    <property type="match status" value="1"/>
</dbReference>
<dbReference type="InterPro" id="IPR036393">
    <property type="entry name" value="AceGlu_kinase-like_sf"/>
</dbReference>
<dbReference type="InterPro" id="IPR004662">
    <property type="entry name" value="AcgluKinase_fam"/>
</dbReference>
<dbReference type="InterPro" id="IPR037528">
    <property type="entry name" value="ArgB"/>
</dbReference>
<dbReference type="InterPro" id="IPR001048">
    <property type="entry name" value="Asp/Glu/Uridylate_kinase"/>
</dbReference>
<dbReference type="NCBIfam" id="TIGR00761">
    <property type="entry name" value="argB"/>
    <property type="match status" value="1"/>
</dbReference>
<dbReference type="PANTHER" id="PTHR23342">
    <property type="entry name" value="N-ACETYLGLUTAMATE SYNTHASE"/>
    <property type="match status" value="1"/>
</dbReference>
<dbReference type="PANTHER" id="PTHR23342:SF0">
    <property type="entry name" value="N-ACETYLGLUTAMATE SYNTHASE, MITOCHONDRIAL"/>
    <property type="match status" value="1"/>
</dbReference>
<dbReference type="Pfam" id="PF00696">
    <property type="entry name" value="AA_kinase"/>
    <property type="match status" value="1"/>
</dbReference>
<dbReference type="PIRSF" id="PIRSF000728">
    <property type="entry name" value="NAGK"/>
    <property type="match status" value="1"/>
</dbReference>
<dbReference type="SUPFAM" id="SSF53633">
    <property type="entry name" value="Carbamate kinase-like"/>
    <property type="match status" value="1"/>
</dbReference>
<protein>
    <recommendedName>
        <fullName evidence="1">Acetylglutamate kinase</fullName>
        <ecNumber evidence="1">2.7.2.8</ecNumber>
    </recommendedName>
    <alternativeName>
        <fullName evidence="1">N-acetyl-L-glutamate 5-phosphotransferase</fullName>
    </alternativeName>
    <alternativeName>
        <fullName evidence="1">NAG kinase</fullName>
        <shortName evidence="1">NAGK</shortName>
    </alternativeName>
</protein>
<sequence length="255" mass="27377">MNDYIVVKCGGSMLEQLNDVFFDCIKKLQQQYKVVIVHGGGPEIDAKLKDCNINVEKRDGLRVTPKEVMDVVQMVLCGSTNKKFVMNLQKHNLLAVGCSGCDGKLLQVQPVSEEIGYVGEVSYVETALLKGLINMNYIPVIAPIGIHDNEIYNINADTAAAGIAAALSAKELILITDVDGILHEGKLVKKTDESEIATLIEKGVITGGMIPKVQAALASLKMGVQKISIVNGTKDFTEDTGECIGTTVTRGVSIV</sequence>
<comment type="function">
    <text evidence="1">Catalyzes the ATP-dependent phosphorylation of N-acetyl-L-glutamate.</text>
</comment>
<comment type="catalytic activity">
    <reaction evidence="1">
        <text>N-acetyl-L-glutamate + ATP = N-acetyl-L-glutamyl 5-phosphate + ADP</text>
        <dbReference type="Rhea" id="RHEA:14629"/>
        <dbReference type="ChEBI" id="CHEBI:30616"/>
        <dbReference type="ChEBI" id="CHEBI:44337"/>
        <dbReference type="ChEBI" id="CHEBI:57936"/>
        <dbReference type="ChEBI" id="CHEBI:456216"/>
        <dbReference type="EC" id="2.7.2.8"/>
    </reaction>
</comment>
<comment type="pathway">
    <text evidence="1">Amino-acid biosynthesis; L-arginine biosynthesis; N(2)-acetyl-L-ornithine from L-glutamate: step 2/4.</text>
</comment>
<comment type="subcellular location">
    <subcellularLocation>
        <location evidence="1">Cytoplasm</location>
    </subcellularLocation>
</comment>
<comment type="similarity">
    <text evidence="1">Belongs to the acetylglutamate kinase family. ArgB subfamily.</text>
</comment>
<gene>
    <name evidence="1" type="primary">argB</name>
    <name type="ordered locus">BCAH820_4154</name>
</gene>
<accession>B7JLY5</accession>
<feature type="chain" id="PRO_1000117116" description="Acetylglutamate kinase">
    <location>
        <begin position="1"/>
        <end position="255"/>
    </location>
</feature>
<feature type="binding site" evidence="1">
    <location>
        <begin position="40"/>
        <end position="41"/>
    </location>
    <ligand>
        <name>substrate</name>
    </ligand>
</feature>
<feature type="binding site" evidence="1">
    <location>
        <position position="62"/>
    </location>
    <ligand>
        <name>substrate</name>
    </ligand>
</feature>
<feature type="binding site" evidence="1">
    <location>
        <position position="153"/>
    </location>
    <ligand>
        <name>substrate</name>
    </ligand>
</feature>
<feature type="site" description="Transition state stabilizer" evidence="1">
    <location>
        <position position="8"/>
    </location>
</feature>
<feature type="site" description="Transition state stabilizer" evidence="1">
    <location>
        <position position="212"/>
    </location>
</feature>
<keyword id="KW-0028">Amino-acid biosynthesis</keyword>
<keyword id="KW-0055">Arginine biosynthesis</keyword>
<keyword id="KW-0067">ATP-binding</keyword>
<keyword id="KW-0963">Cytoplasm</keyword>
<keyword id="KW-0418">Kinase</keyword>
<keyword id="KW-0547">Nucleotide-binding</keyword>
<keyword id="KW-0808">Transferase</keyword>